<gene>
    <name evidence="1" type="primary">minE</name>
    <name type="ordered locus">xcc-b100_3218</name>
</gene>
<organism>
    <name type="scientific">Xanthomonas campestris pv. campestris (strain B100)</name>
    <dbReference type="NCBI Taxonomy" id="509169"/>
    <lineage>
        <taxon>Bacteria</taxon>
        <taxon>Pseudomonadati</taxon>
        <taxon>Pseudomonadota</taxon>
        <taxon>Gammaproteobacteria</taxon>
        <taxon>Lysobacterales</taxon>
        <taxon>Lysobacteraceae</taxon>
        <taxon>Xanthomonas</taxon>
    </lineage>
</organism>
<sequence length="85" mass="9612">MGLLDFLKSKKNTAETAKNRLQIIIAQERNHRGGPDYLPLMQRELLEVIKKYVNIDADAVRVDLVKDGEHDVLDITVALPEDGDK</sequence>
<reference key="1">
    <citation type="journal article" date="2008" name="J. Biotechnol.">
        <title>The genome of Xanthomonas campestris pv. campestris B100 and its use for the reconstruction of metabolic pathways involved in xanthan biosynthesis.</title>
        <authorList>
            <person name="Vorhoelter F.-J."/>
            <person name="Schneiker S."/>
            <person name="Goesmann A."/>
            <person name="Krause L."/>
            <person name="Bekel T."/>
            <person name="Kaiser O."/>
            <person name="Linke B."/>
            <person name="Patschkowski T."/>
            <person name="Rueckert C."/>
            <person name="Schmid J."/>
            <person name="Sidhu V.K."/>
            <person name="Sieber V."/>
            <person name="Tauch A."/>
            <person name="Watt S.A."/>
            <person name="Weisshaar B."/>
            <person name="Becker A."/>
            <person name="Niehaus K."/>
            <person name="Puehler A."/>
        </authorList>
    </citation>
    <scope>NUCLEOTIDE SEQUENCE [LARGE SCALE GENOMIC DNA]</scope>
    <source>
        <strain>B100</strain>
    </source>
</reference>
<dbReference type="EMBL" id="AM920689">
    <property type="protein sequence ID" value="CAP52583.1"/>
    <property type="molecule type" value="Genomic_DNA"/>
</dbReference>
<dbReference type="SMR" id="B0RY63"/>
<dbReference type="KEGG" id="xca:xcc-b100_3218"/>
<dbReference type="HOGENOM" id="CLU_137929_2_1_6"/>
<dbReference type="Proteomes" id="UP000001188">
    <property type="component" value="Chromosome"/>
</dbReference>
<dbReference type="GO" id="GO:0051301">
    <property type="term" value="P:cell division"/>
    <property type="evidence" value="ECO:0007669"/>
    <property type="project" value="UniProtKB-KW"/>
</dbReference>
<dbReference type="GO" id="GO:0032955">
    <property type="term" value="P:regulation of division septum assembly"/>
    <property type="evidence" value="ECO:0007669"/>
    <property type="project" value="InterPro"/>
</dbReference>
<dbReference type="FunFam" id="3.30.1070.10:FF:000001">
    <property type="entry name" value="Cell division topological specificity factor"/>
    <property type="match status" value="1"/>
</dbReference>
<dbReference type="Gene3D" id="3.30.1070.10">
    <property type="entry name" value="Cell division topological specificity factor MinE"/>
    <property type="match status" value="1"/>
</dbReference>
<dbReference type="HAMAP" id="MF_00262">
    <property type="entry name" value="MinE"/>
    <property type="match status" value="1"/>
</dbReference>
<dbReference type="InterPro" id="IPR005527">
    <property type="entry name" value="MinE"/>
</dbReference>
<dbReference type="InterPro" id="IPR036707">
    <property type="entry name" value="MinE_sf"/>
</dbReference>
<dbReference type="NCBIfam" id="TIGR01215">
    <property type="entry name" value="minE"/>
    <property type="match status" value="1"/>
</dbReference>
<dbReference type="NCBIfam" id="NF001422">
    <property type="entry name" value="PRK00296.1"/>
    <property type="match status" value="1"/>
</dbReference>
<dbReference type="Pfam" id="PF03776">
    <property type="entry name" value="MinE"/>
    <property type="match status" value="1"/>
</dbReference>
<dbReference type="SUPFAM" id="SSF55229">
    <property type="entry name" value="Cell division protein MinE topological specificity domain"/>
    <property type="match status" value="1"/>
</dbReference>
<keyword id="KW-0131">Cell cycle</keyword>
<keyword id="KW-0132">Cell division</keyword>
<accession>B0RY63</accession>
<protein>
    <recommendedName>
        <fullName evidence="1">Cell division topological specificity factor</fullName>
    </recommendedName>
</protein>
<feature type="chain" id="PRO_1000114252" description="Cell division topological specificity factor">
    <location>
        <begin position="1"/>
        <end position="85"/>
    </location>
</feature>
<evidence type="ECO:0000255" key="1">
    <source>
        <dbReference type="HAMAP-Rule" id="MF_00262"/>
    </source>
</evidence>
<proteinExistence type="inferred from homology"/>
<name>MINE_XANCB</name>
<comment type="function">
    <text evidence="1">Prevents the cell division inhibition by proteins MinC and MinD at internal division sites while permitting inhibition at polar sites. This ensures cell division at the proper site by restricting the formation of a division septum at the midpoint of the long axis of the cell.</text>
</comment>
<comment type="similarity">
    <text evidence="1">Belongs to the MinE family.</text>
</comment>